<proteinExistence type="inferred from homology"/>
<name>AIS_ECOLU</name>
<evidence type="ECO:0000255" key="1">
    <source>
        <dbReference type="HAMAP-Rule" id="MF_01868"/>
    </source>
</evidence>
<reference key="1">
    <citation type="journal article" date="2009" name="PLoS Genet.">
        <title>Organised genome dynamics in the Escherichia coli species results in highly diverse adaptive paths.</title>
        <authorList>
            <person name="Touchon M."/>
            <person name="Hoede C."/>
            <person name="Tenaillon O."/>
            <person name="Barbe V."/>
            <person name="Baeriswyl S."/>
            <person name="Bidet P."/>
            <person name="Bingen E."/>
            <person name="Bonacorsi S."/>
            <person name="Bouchier C."/>
            <person name="Bouvet O."/>
            <person name="Calteau A."/>
            <person name="Chiapello H."/>
            <person name="Clermont O."/>
            <person name="Cruveiller S."/>
            <person name="Danchin A."/>
            <person name="Diard M."/>
            <person name="Dossat C."/>
            <person name="Karoui M.E."/>
            <person name="Frapy E."/>
            <person name="Garry L."/>
            <person name="Ghigo J.M."/>
            <person name="Gilles A.M."/>
            <person name="Johnson J."/>
            <person name="Le Bouguenec C."/>
            <person name="Lescat M."/>
            <person name="Mangenot S."/>
            <person name="Martinez-Jehanne V."/>
            <person name="Matic I."/>
            <person name="Nassif X."/>
            <person name="Oztas S."/>
            <person name="Petit M.A."/>
            <person name="Pichon C."/>
            <person name="Rouy Z."/>
            <person name="Ruf C.S."/>
            <person name="Schneider D."/>
            <person name="Tourret J."/>
            <person name="Vacherie B."/>
            <person name="Vallenet D."/>
            <person name="Medigue C."/>
            <person name="Rocha E.P.C."/>
            <person name="Denamur E."/>
        </authorList>
    </citation>
    <scope>NUCLEOTIDE SEQUENCE [LARGE SCALE GENOMIC DNA]</scope>
    <source>
        <strain>UMN026 / ExPEC</strain>
    </source>
</reference>
<sequence length="200" mass="22291">MLAFCRSSLKSKKYFIILLALAAIAGLGTHAAWSSNGLPRIDNKTLARLAQQHPVVVLFRHAERCDRSTNQCLSDKTGITVKGTQDARELGNAFSADIPDFDLYSSNTVRTIQSATWFSAGKKLTVDKRLLQCGNEIYSAIKDLQSKAPDKNIVIFTHNHCLTYIAKDKRDATFKPDYLDGLVMHVEKGKVYLDGEFVNH</sequence>
<dbReference type="EC" id="3.1.3.-" evidence="1"/>
<dbReference type="EMBL" id="CU928163">
    <property type="protein sequence ID" value="CAR13776.1"/>
    <property type="molecule type" value="Genomic_DNA"/>
</dbReference>
<dbReference type="RefSeq" id="WP_001306469.1">
    <property type="nucleotide sequence ID" value="NC_011751.1"/>
</dbReference>
<dbReference type="RefSeq" id="YP_002413304.1">
    <property type="nucleotide sequence ID" value="NC_011751.1"/>
</dbReference>
<dbReference type="SMR" id="B7N5L7"/>
<dbReference type="STRING" id="585056.ECUMN_2593"/>
<dbReference type="KEGG" id="eum:ECUMN_2593"/>
<dbReference type="PATRIC" id="fig|585056.7.peg.2774"/>
<dbReference type="HOGENOM" id="CLU_106705_1_0_6"/>
<dbReference type="UniPathway" id="UPA00451"/>
<dbReference type="Proteomes" id="UP000007097">
    <property type="component" value="Chromosome"/>
</dbReference>
<dbReference type="GO" id="GO:0042597">
    <property type="term" value="C:periplasmic space"/>
    <property type="evidence" value="ECO:0007669"/>
    <property type="project" value="UniProtKB-SubCell"/>
</dbReference>
<dbReference type="GO" id="GO:0016791">
    <property type="term" value="F:phosphatase activity"/>
    <property type="evidence" value="ECO:0007669"/>
    <property type="project" value="UniProtKB-UniRule"/>
</dbReference>
<dbReference type="GO" id="GO:0008653">
    <property type="term" value="P:lipopolysaccharide metabolic process"/>
    <property type="evidence" value="ECO:0007669"/>
    <property type="project" value="UniProtKB-UniRule"/>
</dbReference>
<dbReference type="CDD" id="cd07040">
    <property type="entry name" value="HP"/>
    <property type="match status" value="1"/>
</dbReference>
<dbReference type="Gene3D" id="3.40.50.1240">
    <property type="entry name" value="Phosphoglycerate mutase-like"/>
    <property type="match status" value="1"/>
</dbReference>
<dbReference type="HAMAP" id="MF_01868">
    <property type="entry name" value="Ais"/>
    <property type="match status" value="1"/>
</dbReference>
<dbReference type="InterPro" id="IPR013078">
    <property type="entry name" value="His_Pase_superF_clade-1"/>
</dbReference>
<dbReference type="InterPro" id="IPR029033">
    <property type="entry name" value="His_PPase_superfam"/>
</dbReference>
<dbReference type="InterPro" id="IPR011310">
    <property type="entry name" value="LipoPS_heptP_Pase"/>
</dbReference>
<dbReference type="NCBIfam" id="NF011945">
    <property type="entry name" value="PRK15416.1"/>
    <property type="match status" value="1"/>
</dbReference>
<dbReference type="Pfam" id="PF00300">
    <property type="entry name" value="His_Phos_1"/>
    <property type="match status" value="1"/>
</dbReference>
<dbReference type="PIRSF" id="PIRSF011416">
    <property type="entry name" value="Ais-TraG-AfrS"/>
    <property type="match status" value="1"/>
</dbReference>
<dbReference type="SUPFAM" id="SSF53254">
    <property type="entry name" value="Phosphoglycerate mutase-like"/>
    <property type="match status" value="1"/>
</dbReference>
<comment type="function">
    <text evidence="1">Catalyzes the dephosphorylation of heptose(II) of the outer membrane lipopolysaccharide core.</text>
</comment>
<comment type="pathway">
    <text evidence="1">Bacterial outer membrane biogenesis; lipopolysaccharide metabolism.</text>
</comment>
<comment type="subcellular location">
    <subcellularLocation>
        <location evidence="1">Periplasm</location>
    </subcellularLocation>
</comment>
<comment type="similarity">
    <text evidence="1">Belongs to the phosphoglycerate mutase family. Ais subfamily.</text>
</comment>
<gene>
    <name evidence="1" type="primary">ais</name>
    <name type="ordered locus">ECUMN_2593</name>
</gene>
<feature type="signal peptide" evidence="1">
    <location>
        <begin position="1"/>
        <end position="25"/>
    </location>
</feature>
<feature type="chain" id="PRO_0000380564" description="Lipopolysaccharide core heptose(II)-phosphate phosphatase">
    <location>
        <begin position="26"/>
        <end position="200"/>
    </location>
</feature>
<keyword id="KW-0378">Hydrolase</keyword>
<keyword id="KW-0574">Periplasm</keyword>
<keyword id="KW-0732">Signal</keyword>
<organism>
    <name type="scientific">Escherichia coli O17:K52:H18 (strain UMN026 / ExPEC)</name>
    <dbReference type="NCBI Taxonomy" id="585056"/>
    <lineage>
        <taxon>Bacteria</taxon>
        <taxon>Pseudomonadati</taxon>
        <taxon>Pseudomonadota</taxon>
        <taxon>Gammaproteobacteria</taxon>
        <taxon>Enterobacterales</taxon>
        <taxon>Enterobacteriaceae</taxon>
        <taxon>Escherichia</taxon>
    </lineage>
</organism>
<protein>
    <recommendedName>
        <fullName evidence="1">Lipopolysaccharide core heptose(II)-phosphate phosphatase</fullName>
        <ecNumber evidence="1">3.1.3.-</ecNumber>
    </recommendedName>
</protein>
<accession>B7N5L7</accession>